<gene>
    <name type="primary">Art4</name>
</gene>
<protein>
    <recommendedName>
        <fullName>Ecto-ADP-ribosyltransferase 4</fullName>
        <ecNumber>2.4.2.31</ecNumber>
    </recommendedName>
    <alternativeName>
        <fullName>ADP-ribosyltransferase C2 and C3 toxin-like 4</fullName>
        <shortName>ARTC4</shortName>
    </alternativeName>
    <alternativeName>
        <fullName>Mono(ADP-ribosyl)transferase 4</fullName>
    </alternativeName>
    <alternativeName>
        <fullName>NAD(P)(+)--arginine ADP-ribosyltransferase 4</fullName>
    </alternativeName>
    <cdAntigenName>CD297</cdAntigenName>
</protein>
<reference key="1">
    <citation type="journal article" date="2002" name="Protein Sci.">
        <title>The family of toxin-related ecto-ADP-ribosyltransferases in humans and the mouse.</title>
        <authorList>
            <person name="Glowacki G."/>
            <person name="Braren R."/>
            <person name="Firner K."/>
            <person name="Nissen M."/>
            <person name="Kuehl M."/>
            <person name="Reche P."/>
            <person name="Bazan J.F."/>
            <person name="Cetkovic-Cvrlje M."/>
            <person name="Leiter E."/>
            <person name="Haag F."/>
            <person name="Koch-Nolte F."/>
        </authorList>
    </citation>
    <scope>NUCLEOTIDE SEQUENCE [GENOMIC DNA]</scope>
</reference>
<reference key="2">
    <citation type="journal article" date="2005" name="Science">
        <title>The transcriptional landscape of the mammalian genome.</title>
        <authorList>
            <person name="Carninci P."/>
            <person name="Kasukawa T."/>
            <person name="Katayama S."/>
            <person name="Gough J."/>
            <person name="Frith M.C."/>
            <person name="Maeda N."/>
            <person name="Oyama R."/>
            <person name="Ravasi T."/>
            <person name="Lenhard B."/>
            <person name="Wells C."/>
            <person name="Kodzius R."/>
            <person name="Shimokawa K."/>
            <person name="Bajic V.B."/>
            <person name="Brenner S.E."/>
            <person name="Batalov S."/>
            <person name="Forrest A.R."/>
            <person name="Zavolan M."/>
            <person name="Davis M.J."/>
            <person name="Wilming L.G."/>
            <person name="Aidinis V."/>
            <person name="Allen J.E."/>
            <person name="Ambesi-Impiombato A."/>
            <person name="Apweiler R."/>
            <person name="Aturaliya R.N."/>
            <person name="Bailey T.L."/>
            <person name="Bansal M."/>
            <person name="Baxter L."/>
            <person name="Beisel K.W."/>
            <person name="Bersano T."/>
            <person name="Bono H."/>
            <person name="Chalk A.M."/>
            <person name="Chiu K.P."/>
            <person name="Choudhary V."/>
            <person name="Christoffels A."/>
            <person name="Clutterbuck D.R."/>
            <person name="Crowe M.L."/>
            <person name="Dalla E."/>
            <person name="Dalrymple B.P."/>
            <person name="de Bono B."/>
            <person name="Della Gatta G."/>
            <person name="di Bernardo D."/>
            <person name="Down T."/>
            <person name="Engstrom P."/>
            <person name="Fagiolini M."/>
            <person name="Faulkner G."/>
            <person name="Fletcher C.F."/>
            <person name="Fukushima T."/>
            <person name="Furuno M."/>
            <person name="Futaki S."/>
            <person name="Gariboldi M."/>
            <person name="Georgii-Hemming P."/>
            <person name="Gingeras T.R."/>
            <person name="Gojobori T."/>
            <person name="Green R.E."/>
            <person name="Gustincich S."/>
            <person name="Harbers M."/>
            <person name="Hayashi Y."/>
            <person name="Hensch T.K."/>
            <person name="Hirokawa N."/>
            <person name="Hill D."/>
            <person name="Huminiecki L."/>
            <person name="Iacono M."/>
            <person name="Ikeo K."/>
            <person name="Iwama A."/>
            <person name="Ishikawa T."/>
            <person name="Jakt M."/>
            <person name="Kanapin A."/>
            <person name="Katoh M."/>
            <person name="Kawasawa Y."/>
            <person name="Kelso J."/>
            <person name="Kitamura H."/>
            <person name="Kitano H."/>
            <person name="Kollias G."/>
            <person name="Krishnan S.P."/>
            <person name="Kruger A."/>
            <person name="Kummerfeld S.K."/>
            <person name="Kurochkin I.V."/>
            <person name="Lareau L.F."/>
            <person name="Lazarevic D."/>
            <person name="Lipovich L."/>
            <person name="Liu J."/>
            <person name="Liuni S."/>
            <person name="McWilliam S."/>
            <person name="Madan Babu M."/>
            <person name="Madera M."/>
            <person name="Marchionni L."/>
            <person name="Matsuda H."/>
            <person name="Matsuzawa S."/>
            <person name="Miki H."/>
            <person name="Mignone F."/>
            <person name="Miyake S."/>
            <person name="Morris K."/>
            <person name="Mottagui-Tabar S."/>
            <person name="Mulder N."/>
            <person name="Nakano N."/>
            <person name="Nakauchi H."/>
            <person name="Ng P."/>
            <person name="Nilsson R."/>
            <person name="Nishiguchi S."/>
            <person name="Nishikawa S."/>
            <person name="Nori F."/>
            <person name="Ohara O."/>
            <person name="Okazaki Y."/>
            <person name="Orlando V."/>
            <person name="Pang K.C."/>
            <person name="Pavan W.J."/>
            <person name="Pavesi G."/>
            <person name="Pesole G."/>
            <person name="Petrovsky N."/>
            <person name="Piazza S."/>
            <person name="Reed J."/>
            <person name="Reid J.F."/>
            <person name="Ring B.Z."/>
            <person name="Ringwald M."/>
            <person name="Rost B."/>
            <person name="Ruan Y."/>
            <person name="Salzberg S.L."/>
            <person name="Sandelin A."/>
            <person name="Schneider C."/>
            <person name="Schoenbach C."/>
            <person name="Sekiguchi K."/>
            <person name="Semple C.A."/>
            <person name="Seno S."/>
            <person name="Sessa L."/>
            <person name="Sheng Y."/>
            <person name="Shibata Y."/>
            <person name="Shimada H."/>
            <person name="Shimada K."/>
            <person name="Silva D."/>
            <person name="Sinclair B."/>
            <person name="Sperling S."/>
            <person name="Stupka E."/>
            <person name="Sugiura K."/>
            <person name="Sultana R."/>
            <person name="Takenaka Y."/>
            <person name="Taki K."/>
            <person name="Tammoja K."/>
            <person name="Tan S.L."/>
            <person name="Tang S."/>
            <person name="Taylor M.S."/>
            <person name="Tegner J."/>
            <person name="Teichmann S.A."/>
            <person name="Ueda H.R."/>
            <person name="van Nimwegen E."/>
            <person name="Verardo R."/>
            <person name="Wei C.L."/>
            <person name="Yagi K."/>
            <person name="Yamanishi H."/>
            <person name="Zabarovsky E."/>
            <person name="Zhu S."/>
            <person name="Zimmer A."/>
            <person name="Hide W."/>
            <person name="Bult C."/>
            <person name="Grimmond S.M."/>
            <person name="Teasdale R.D."/>
            <person name="Liu E.T."/>
            <person name="Brusic V."/>
            <person name="Quackenbush J."/>
            <person name="Wahlestedt C."/>
            <person name="Mattick J.S."/>
            <person name="Hume D.A."/>
            <person name="Kai C."/>
            <person name="Sasaki D."/>
            <person name="Tomaru Y."/>
            <person name="Fukuda S."/>
            <person name="Kanamori-Katayama M."/>
            <person name="Suzuki M."/>
            <person name="Aoki J."/>
            <person name="Arakawa T."/>
            <person name="Iida J."/>
            <person name="Imamura K."/>
            <person name="Itoh M."/>
            <person name="Kato T."/>
            <person name="Kawaji H."/>
            <person name="Kawagashira N."/>
            <person name="Kawashima T."/>
            <person name="Kojima M."/>
            <person name="Kondo S."/>
            <person name="Konno H."/>
            <person name="Nakano K."/>
            <person name="Ninomiya N."/>
            <person name="Nishio T."/>
            <person name="Okada M."/>
            <person name="Plessy C."/>
            <person name="Shibata K."/>
            <person name="Shiraki T."/>
            <person name="Suzuki S."/>
            <person name="Tagami M."/>
            <person name="Waki K."/>
            <person name="Watahiki A."/>
            <person name="Okamura-Oho Y."/>
            <person name="Suzuki H."/>
            <person name="Kawai J."/>
            <person name="Hayashizaki Y."/>
        </authorList>
    </citation>
    <scope>NUCLEOTIDE SEQUENCE [LARGE SCALE MRNA]</scope>
    <source>
        <strain>C57BL/6J</strain>
        <tissue>Liver</tissue>
        <tissue>Lung</tissue>
    </source>
</reference>
<reference key="3">
    <citation type="journal article" date="2009" name="PLoS Biol.">
        <title>Lineage-specific biology revealed by a finished genome assembly of the mouse.</title>
        <authorList>
            <person name="Church D.M."/>
            <person name="Goodstadt L."/>
            <person name="Hillier L.W."/>
            <person name="Zody M.C."/>
            <person name="Goldstein S."/>
            <person name="She X."/>
            <person name="Bult C.J."/>
            <person name="Agarwala R."/>
            <person name="Cherry J.L."/>
            <person name="DiCuccio M."/>
            <person name="Hlavina W."/>
            <person name="Kapustin Y."/>
            <person name="Meric P."/>
            <person name="Maglott D."/>
            <person name="Birtle Z."/>
            <person name="Marques A.C."/>
            <person name="Graves T."/>
            <person name="Zhou S."/>
            <person name="Teague B."/>
            <person name="Potamousis K."/>
            <person name="Churas C."/>
            <person name="Place M."/>
            <person name="Herschleb J."/>
            <person name="Runnheim R."/>
            <person name="Forrest D."/>
            <person name="Amos-Landgraf J."/>
            <person name="Schwartz D.C."/>
            <person name="Cheng Z."/>
            <person name="Lindblad-Toh K."/>
            <person name="Eichler E.E."/>
            <person name="Ponting C.P."/>
        </authorList>
    </citation>
    <scope>NUCLEOTIDE SEQUENCE [LARGE SCALE GENOMIC DNA]</scope>
    <source>
        <strain>C57BL/6J</strain>
    </source>
</reference>
<reference key="4">
    <citation type="journal article" date="2004" name="Genome Res.">
        <title>The status, quality, and expansion of the NIH full-length cDNA project: the Mammalian Gene Collection (MGC).</title>
        <authorList>
            <consortium name="The MGC Project Team"/>
        </authorList>
    </citation>
    <scope>NUCLEOTIDE SEQUENCE [LARGE SCALE MRNA]</scope>
    <source>
        <tissue>Olfactory epithelium</tissue>
    </source>
</reference>
<reference key="5">
    <citation type="journal article" date="2010" name="Cell">
        <title>A tissue-specific atlas of mouse protein phosphorylation and expression.</title>
        <authorList>
            <person name="Huttlin E.L."/>
            <person name="Jedrychowski M.P."/>
            <person name="Elias J.E."/>
            <person name="Goswami T."/>
            <person name="Rad R."/>
            <person name="Beausoleil S.A."/>
            <person name="Villen J."/>
            <person name="Haas W."/>
            <person name="Sowa M.E."/>
            <person name="Gygi S.P."/>
        </authorList>
    </citation>
    <scope>IDENTIFICATION BY MASS SPECTROMETRY [LARGE SCALE ANALYSIS]</scope>
    <source>
        <tissue>Lung</tissue>
        <tissue>Spleen</tissue>
    </source>
</reference>
<sequence length="300" mass="33080">MALWLPGGQLTLLLLLWVQQTPAGSTEAPLKVDVDLTPDSFDDQYQGCSEQMVEELNQGDYFIKEVDTHKYYSRAWQKAHLTWLNQAKALPESMTPVHAVAIVVFTLNLNVSSDLAKAMARAAGSPGQYSQSFHFKYLHYYLTSAIQLLRKDSSTKNGSLCYKVYHGMKDVSIGANVGSTIRFGQFLSASLLKEETRVSGNQTLFTIFTCLGASVQDFSLRKEVLIPPYELFEVVSKSGSPKGDLINLRSAGNMSTYNCQLLKACSKKCAPAPVVIGCLFLVTVVISSKSRAQRNLLAPF</sequence>
<keyword id="KW-0095">Blood group antigen</keyword>
<keyword id="KW-1003">Cell membrane</keyword>
<keyword id="KW-1015">Disulfide bond</keyword>
<keyword id="KW-0325">Glycoprotein</keyword>
<keyword id="KW-0328">Glycosyltransferase</keyword>
<keyword id="KW-0336">GPI-anchor</keyword>
<keyword id="KW-0449">Lipoprotein</keyword>
<keyword id="KW-0472">Membrane</keyword>
<keyword id="KW-0520">NAD</keyword>
<keyword id="KW-0521">NADP</keyword>
<keyword id="KW-0548">Nucleotidyltransferase</keyword>
<keyword id="KW-1185">Reference proteome</keyword>
<keyword id="KW-0732">Signal</keyword>
<keyword id="KW-0808">Transferase</keyword>
<keyword id="KW-0812">Transmembrane</keyword>
<keyword id="KW-1133">Transmembrane helix</keyword>
<organism>
    <name type="scientific">Mus musculus</name>
    <name type="common">Mouse</name>
    <dbReference type="NCBI Taxonomy" id="10090"/>
    <lineage>
        <taxon>Eukaryota</taxon>
        <taxon>Metazoa</taxon>
        <taxon>Chordata</taxon>
        <taxon>Craniata</taxon>
        <taxon>Vertebrata</taxon>
        <taxon>Euteleostomi</taxon>
        <taxon>Mammalia</taxon>
        <taxon>Eutheria</taxon>
        <taxon>Euarchontoglires</taxon>
        <taxon>Glires</taxon>
        <taxon>Rodentia</taxon>
        <taxon>Myomorpha</taxon>
        <taxon>Muroidea</taxon>
        <taxon>Muridae</taxon>
        <taxon>Murinae</taxon>
        <taxon>Mus</taxon>
        <taxon>Mus</taxon>
    </lineage>
</organism>
<evidence type="ECO:0000250" key="1"/>
<evidence type="ECO:0000255" key="2"/>
<evidence type="ECO:0000255" key="3">
    <source>
        <dbReference type="PROSITE-ProRule" id="PRU01340"/>
    </source>
</evidence>
<evidence type="ECO:0000305" key="4"/>
<comment type="catalytic activity">
    <reaction>
        <text>L-arginyl-[protein] + NAD(+) = N(omega)-(ADP-D-ribosyl)-L-arginyl-[protein] + nicotinamide + H(+)</text>
        <dbReference type="Rhea" id="RHEA:19149"/>
        <dbReference type="Rhea" id="RHEA-COMP:10532"/>
        <dbReference type="Rhea" id="RHEA-COMP:15087"/>
        <dbReference type="ChEBI" id="CHEBI:15378"/>
        <dbReference type="ChEBI" id="CHEBI:17154"/>
        <dbReference type="ChEBI" id="CHEBI:29965"/>
        <dbReference type="ChEBI" id="CHEBI:57540"/>
        <dbReference type="ChEBI" id="CHEBI:142554"/>
        <dbReference type="EC" id="2.4.2.31"/>
    </reaction>
</comment>
<comment type="subcellular location">
    <subcellularLocation>
        <location evidence="4">Membrane</location>
        <topology evidence="4">Single-pass type I membrane protein</topology>
    </subcellularLocation>
    <subcellularLocation>
        <location evidence="1">Cell membrane</location>
        <topology evidence="1">Lipid-anchor</topology>
        <topology evidence="1">GPI-anchor</topology>
    </subcellularLocation>
</comment>
<comment type="similarity">
    <text evidence="4">Belongs to the Arg-specific ADP-ribosyltransferase family.</text>
</comment>
<name>NAR4_MOUSE</name>
<dbReference type="EC" id="2.4.2.31"/>
<dbReference type="EMBL" id="AJ486881">
    <property type="protein sequence ID" value="CAD31119.1"/>
    <property type="molecule type" value="Genomic_DNA"/>
</dbReference>
<dbReference type="EMBL" id="Y08300">
    <property type="protein sequence ID" value="CAA69608.1"/>
    <property type="molecule type" value="Genomic_DNA"/>
</dbReference>
<dbReference type="EMBL" id="AK004744">
    <property type="protein sequence ID" value="BAB23525.1"/>
    <property type="molecule type" value="mRNA"/>
</dbReference>
<dbReference type="EMBL" id="AK019467">
    <property type="protein sequence ID" value="BAB31738.1"/>
    <property type="molecule type" value="mRNA"/>
</dbReference>
<dbReference type="EMBL" id="AC122804">
    <property type="status" value="NOT_ANNOTATED_CDS"/>
    <property type="molecule type" value="Genomic_DNA"/>
</dbReference>
<dbReference type="EMBL" id="BC046306">
    <property type="protein sequence ID" value="AAH46306.1"/>
    <property type="molecule type" value="mRNA"/>
</dbReference>
<dbReference type="CCDS" id="CCDS20658.1"/>
<dbReference type="RefSeq" id="NP_080915.1">
    <property type="nucleotide sequence ID" value="NM_026639.2"/>
</dbReference>
<dbReference type="SMR" id="Q9CRA0"/>
<dbReference type="FunCoup" id="Q9CRA0">
    <property type="interactions" value="14"/>
</dbReference>
<dbReference type="STRING" id="10090.ENSMUSP00000032341"/>
<dbReference type="GlyCosmos" id="Q9CRA0">
    <property type="glycosylation" value="4 sites, No reported glycans"/>
</dbReference>
<dbReference type="GlyGen" id="Q9CRA0">
    <property type="glycosylation" value="5 sites, 1 O-linked glycan (1 site)"/>
</dbReference>
<dbReference type="PhosphoSitePlus" id="Q9CRA0"/>
<dbReference type="PaxDb" id="10090-ENSMUSP00000032341"/>
<dbReference type="PeptideAtlas" id="Q9CRA0"/>
<dbReference type="ProteomicsDB" id="252770"/>
<dbReference type="Antibodypedia" id="23686">
    <property type="antibodies" value="154 antibodies from 22 providers"/>
</dbReference>
<dbReference type="DNASU" id="109978"/>
<dbReference type="Ensembl" id="ENSMUST00000032341.3">
    <property type="protein sequence ID" value="ENSMUSP00000032341.3"/>
    <property type="gene ID" value="ENSMUSG00000030217.3"/>
</dbReference>
<dbReference type="GeneID" id="109978"/>
<dbReference type="KEGG" id="mmu:109978"/>
<dbReference type="UCSC" id="uc009emk.1">
    <property type="organism name" value="mouse"/>
</dbReference>
<dbReference type="AGR" id="MGI:1202710"/>
<dbReference type="CTD" id="420"/>
<dbReference type="MGI" id="MGI:1202710">
    <property type="gene designation" value="Art4"/>
</dbReference>
<dbReference type="VEuPathDB" id="HostDB:ENSMUSG00000030217"/>
<dbReference type="eggNOG" id="ENOG502SKQR">
    <property type="taxonomic scope" value="Eukaryota"/>
</dbReference>
<dbReference type="GeneTree" id="ENSGT01030000234601"/>
<dbReference type="HOGENOM" id="CLU_059744_4_0_1"/>
<dbReference type="InParanoid" id="Q9CRA0"/>
<dbReference type="OMA" id="HSFHFKY"/>
<dbReference type="OrthoDB" id="423533at2759"/>
<dbReference type="PhylomeDB" id="Q9CRA0"/>
<dbReference type="TreeFam" id="TF335356"/>
<dbReference type="Reactome" id="R-MMU-163125">
    <property type="pathway name" value="Post-translational modification: synthesis of GPI-anchored proteins"/>
</dbReference>
<dbReference type="BioGRID-ORCS" id="109978">
    <property type="hits" value="3 hits in 76 CRISPR screens"/>
</dbReference>
<dbReference type="PRO" id="PR:Q9CRA0"/>
<dbReference type="Proteomes" id="UP000000589">
    <property type="component" value="Chromosome 6"/>
</dbReference>
<dbReference type="RNAct" id="Q9CRA0">
    <property type="molecule type" value="protein"/>
</dbReference>
<dbReference type="Bgee" id="ENSMUSG00000030217">
    <property type="expression patterns" value="Expressed in fetal liver hematopoietic progenitor cell and 84 other cell types or tissues"/>
</dbReference>
<dbReference type="GO" id="GO:0005886">
    <property type="term" value="C:plasma membrane"/>
    <property type="evidence" value="ECO:0007669"/>
    <property type="project" value="UniProtKB-SubCell"/>
</dbReference>
<dbReference type="GO" id="GO:0098552">
    <property type="term" value="C:side of membrane"/>
    <property type="evidence" value="ECO:0007669"/>
    <property type="project" value="UniProtKB-KW"/>
</dbReference>
<dbReference type="GO" id="GO:0106274">
    <property type="term" value="F:NAD+-protein-arginine ADP-ribosyltransferase activity"/>
    <property type="evidence" value="ECO:0007669"/>
    <property type="project" value="UniProtKB-EC"/>
</dbReference>
<dbReference type="GO" id="GO:0016779">
    <property type="term" value="F:nucleotidyltransferase activity"/>
    <property type="evidence" value="ECO:0007669"/>
    <property type="project" value="UniProtKB-KW"/>
</dbReference>
<dbReference type="FunFam" id="3.90.176.10:FF:000001">
    <property type="entry name" value="NAD(P)(+)--arginine ADP-ribosyltransferase"/>
    <property type="match status" value="1"/>
</dbReference>
<dbReference type="Gene3D" id="3.90.176.10">
    <property type="entry name" value="Toxin ADP-ribosyltransferase, Chain A, domain 1"/>
    <property type="match status" value="1"/>
</dbReference>
<dbReference type="InterPro" id="IPR050999">
    <property type="entry name" value="ADP-ribosyltransferase_ARG"/>
</dbReference>
<dbReference type="InterPro" id="IPR000768">
    <property type="entry name" value="ART"/>
</dbReference>
<dbReference type="PANTHER" id="PTHR10339">
    <property type="entry name" value="ADP-RIBOSYLTRANSFERASE"/>
    <property type="match status" value="1"/>
</dbReference>
<dbReference type="PANTHER" id="PTHR10339:SF1">
    <property type="entry name" value="ECTO-ADP-RIBOSYLTRANSFERASE 4"/>
    <property type="match status" value="1"/>
</dbReference>
<dbReference type="Pfam" id="PF01129">
    <property type="entry name" value="ART"/>
    <property type="match status" value="1"/>
</dbReference>
<dbReference type="PRINTS" id="PR00970">
    <property type="entry name" value="RIBTRNSFRASE"/>
</dbReference>
<dbReference type="SUPFAM" id="SSF56399">
    <property type="entry name" value="ADP-ribosylation"/>
    <property type="match status" value="1"/>
</dbReference>
<dbReference type="PROSITE" id="PS01291">
    <property type="entry name" value="ART"/>
    <property type="match status" value="1"/>
</dbReference>
<dbReference type="PROSITE" id="PS51996">
    <property type="entry name" value="TR_MART"/>
    <property type="match status" value="1"/>
</dbReference>
<feature type="signal peptide" evidence="2">
    <location>
        <begin position="1"/>
        <end position="23"/>
    </location>
</feature>
<feature type="chain" id="PRO_0000416110" description="Ecto-ADP-ribosyltransferase 4">
    <location>
        <begin position="24"/>
        <end position="264"/>
    </location>
</feature>
<feature type="propeptide" id="PRO_0000416111" description="Removed in mature form" evidence="2">
    <location>
        <begin position="265"/>
        <end position="300"/>
    </location>
</feature>
<feature type="topological domain" description="Extracellular" evidence="2">
    <location>
        <begin position="24"/>
        <end position="269"/>
    </location>
</feature>
<feature type="transmembrane region" description="Helical" evidence="2">
    <location>
        <begin position="270"/>
        <end position="286"/>
    </location>
</feature>
<feature type="topological domain" description="Cytoplasmic" evidence="2">
    <location>
        <begin position="287"/>
        <end position="300"/>
    </location>
</feature>
<feature type="domain" description="TR mART core" evidence="3">
    <location>
        <begin position="70"/>
        <end position="255"/>
    </location>
</feature>
<feature type="binding site" evidence="1">
    <location>
        <position position="185"/>
    </location>
    <ligand>
        <name>NAD(+)</name>
        <dbReference type="ChEBI" id="CHEBI:57540"/>
    </ligand>
</feature>
<feature type="binding site" evidence="1">
    <location>
        <position position="219"/>
    </location>
    <ligand>
        <name>NAD(+)</name>
        <dbReference type="ChEBI" id="CHEBI:57540"/>
    </ligand>
</feature>
<feature type="lipid moiety-binding region" description="GPI-anchor amidated alanine" evidence="2">
    <location>
        <position position="264"/>
    </location>
</feature>
<feature type="glycosylation site" description="N-linked (GlcNAc...) asparagine" evidence="2">
    <location>
        <position position="110"/>
    </location>
</feature>
<feature type="glycosylation site" description="N-linked (GlcNAc...) asparagine" evidence="2">
    <location>
        <position position="157"/>
    </location>
</feature>
<feature type="glycosylation site" description="N-linked (GlcNAc...) asparagine" evidence="2">
    <location>
        <position position="201"/>
    </location>
</feature>
<feature type="glycosylation site" description="N-linked (GlcNAc...) asparagine" evidence="2">
    <location>
        <position position="253"/>
    </location>
</feature>
<feature type="disulfide bond" evidence="1">
    <location>
        <begin position="48"/>
        <end position="259"/>
    </location>
</feature>
<feature type="disulfide bond" evidence="1">
    <location>
        <begin position="161"/>
        <end position="210"/>
    </location>
</feature>
<feature type="sequence conflict" description="In Ref. 1; CAD31119." evidence="4" ref="1">
    <original>T</original>
    <variation>A</variation>
    <location>
        <position position="26"/>
    </location>
</feature>
<feature type="sequence conflict" description="In Ref. 1; CAD31119." evidence="4" ref="1">
    <original>D</original>
    <variation>N</variation>
    <location>
        <position position="39"/>
    </location>
</feature>
<feature type="sequence conflict" description="In Ref. 1; CAD31119." evidence="4" ref="1">
    <original>L</original>
    <variation>R</variation>
    <location>
        <position position="81"/>
    </location>
</feature>
<feature type="sequence conflict" description="In Ref. 1; CAD31119." evidence="4" ref="1">
    <original>G</original>
    <variation>E</variation>
    <location>
        <position position="174"/>
    </location>
</feature>
<feature type="sequence conflict" description="In Ref. 1; CAA69608." evidence="4" ref="1">
    <original>E</original>
    <variation>G</variation>
    <location>
        <position position="195"/>
    </location>
</feature>
<feature type="sequence conflict" description="In Ref. 1; CAD31119." evidence="4" ref="1">
    <original>G</original>
    <variation>V</variation>
    <location>
        <position position="277"/>
    </location>
</feature>
<feature type="sequence conflict" description="In Ref. 1; CAD31119." evidence="4" ref="1">
    <original>A</original>
    <variation>E</variation>
    <location>
        <position position="292"/>
    </location>
</feature>
<proteinExistence type="evidence at protein level"/>
<accession>Q9CRA0</accession>
<accession>Q80VB5</accession>
<accession>Q80W56</accession>